<dbReference type="EC" id="2.7.1.40"/>
<dbReference type="EMBL" id="AE002160">
    <property type="protein sequence ID" value="AAF39440.1"/>
    <property type="molecule type" value="Genomic_DNA"/>
</dbReference>
<dbReference type="PIR" id="F81684">
    <property type="entry name" value="F81684"/>
</dbReference>
<dbReference type="RefSeq" id="WP_010230987.1">
    <property type="nucleotide sequence ID" value="NZ_CP063055.1"/>
</dbReference>
<dbReference type="SMR" id="Q9PK61"/>
<dbReference type="GeneID" id="1245971"/>
<dbReference type="KEGG" id="cmu:TC_0609"/>
<dbReference type="eggNOG" id="COG0469">
    <property type="taxonomic scope" value="Bacteria"/>
</dbReference>
<dbReference type="HOGENOM" id="CLU_015439_0_2_0"/>
<dbReference type="OrthoDB" id="9812123at2"/>
<dbReference type="UniPathway" id="UPA00109">
    <property type="reaction ID" value="UER00188"/>
</dbReference>
<dbReference type="Proteomes" id="UP000000800">
    <property type="component" value="Chromosome"/>
</dbReference>
<dbReference type="GO" id="GO:0005524">
    <property type="term" value="F:ATP binding"/>
    <property type="evidence" value="ECO:0007669"/>
    <property type="project" value="UniProtKB-KW"/>
</dbReference>
<dbReference type="GO" id="GO:0016301">
    <property type="term" value="F:kinase activity"/>
    <property type="evidence" value="ECO:0007669"/>
    <property type="project" value="UniProtKB-KW"/>
</dbReference>
<dbReference type="GO" id="GO:0000287">
    <property type="term" value="F:magnesium ion binding"/>
    <property type="evidence" value="ECO:0007669"/>
    <property type="project" value="InterPro"/>
</dbReference>
<dbReference type="GO" id="GO:0030955">
    <property type="term" value="F:potassium ion binding"/>
    <property type="evidence" value="ECO:0007669"/>
    <property type="project" value="InterPro"/>
</dbReference>
<dbReference type="GO" id="GO:0004743">
    <property type="term" value="F:pyruvate kinase activity"/>
    <property type="evidence" value="ECO:0007669"/>
    <property type="project" value="UniProtKB-EC"/>
</dbReference>
<dbReference type="Gene3D" id="3.20.20.60">
    <property type="entry name" value="Phosphoenolpyruvate-binding domains"/>
    <property type="match status" value="1"/>
</dbReference>
<dbReference type="Gene3D" id="2.40.33.10">
    <property type="entry name" value="PK beta-barrel domain-like"/>
    <property type="match status" value="1"/>
</dbReference>
<dbReference type="Gene3D" id="3.40.1380.20">
    <property type="entry name" value="Pyruvate kinase, C-terminal domain"/>
    <property type="match status" value="1"/>
</dbReference>
<dbReference type="InterPro" id="IPR001697">
    <property type="entry name" value="Pyr_Knase"/>
</dbReference>
<dbReference type="InterPro" id="IPR015813">
    <property type="entry name" value="Pyrv/PenolPyrv_kinase-like_dom"/>
</dbReference>
<dbReference type="InterPro" id="IPR040442">
    <property type="entry name" value="Pyrv_kinase-like_dom_sf"/>
</dbReference>
<dbReference type="InterPro" id="IPR011037">
    <property type="entry name" value="Pyrv_Knase-like_insert_dom_sf"/>
</dbReference>
<dbReference type="InterPro" id="IPR015793">
    <property type="entry name" value="Pyrv_Knase_brl"/>
</dbReference>
<dbReference type="InterPro" id="IPR015795">
    <property type="entry name" value="Pyrv_Knase_C"/>
</dbReference>
<dbReference type="InterPro" id="IPR036918">
    <property type="entry name" value="Pyrv_Knase_C_sf"/>
</dbReference>
<dbReference type="InterPro" id="IPR015806">
    <property type="entry name" value="Pyrv_Knase_insert_dom_sf"/>
</dbReference>
<dbReference type="NCBIfam" id="NF004491">
    <property type="entry name" value="PRK05826.1"/>
    <property type="match status" value="1"/>
</dbReference>
<dbReference type="NCBIfam" id="NF004978">
    <property type="entry name" value="PRK06354.1"/>
    <property type="match status" value="1"/>
</dbReference>
<dbReference type="NCBIfam" id="TIGR01064">
    <property type="entry name" value="pyruv_kin"/>
    <property type="match status" value="1"/>
</dbReference>
<dbReference type="PANTHER" id="PTHR11817">
    <property type="entry name" value="PYRUVATE KINASE"/>
    <property type="match status" value="1"/>
</dbReference>
<dbReference type="Pfam" id="PF00224">
    <property type="entry name" value="PK"/>
    <property type="match status" value="1"/>
</dbReference>
<dbReference type="Pfam" id="PF02887">
    <property type="entry name" value="PK_C"/>
    <property type="match status" value="1"/>
</dbReference>
<dbReference type="PRINTS" id="PR01050">
    <property type="entry name" value="PYRUVTKNASE"/>
</dbReference>
<dbReference type="SUPFAM" id="SSF51621">
    <property type="entry name" value="Phosphoenolpyruvate/pyruvate domain"/>
    <property type="match status" value="1"/>
</dbReference>
<dbReference type="SUPFAM" id="SSF50800">
    <property type="entry name" value="PK beta-barrel domain-like"/>
    <property type="match status" value="1"/>
</dbReference>
<dbReference type="SUPFAM" id="SSF52935">
    <property type="entry name" value="PK C-terminal domain-like"/>
    <property type="match status" value="1"/>
</dbReference>
<accession>Q9PK61</accession>
<feature type="chain" id="PRO_0000112061" description="Pyruvate kinase">
    <location>
        <begin position="1"/>
        <end position="481"/>
    </location>
</feature>
<feature type="binding site" evidence="1">
    <location>
        <position position="33"/>
    </location>
    <ligand>
        <name>substrate</name>
    </ligand>
</feature>
<feature type="binding site" evidence="2">
    <location>
        <begin position="35"/>
        <end position="38"/>
    </location>
    <ligand>
        <name>ATP</name>
        <dbReference type="ChEBI" id="CHEBI:30616"/>
    </ligand>
</feature>
<feature type="binding site" evidence="1">
    <location>
        <position position="35"/>
    </location>
    <ligand>
        <name>K(+)</name>
        <dbReference type="ChEBI" id="CHEBI:29103"/>
    </ligand>
</feature>
<feature type="binding site" evidence="1">
    <location>
        <position position="37"/>
    </location>
    <ligand>
        <name>K(+)</name>
        <dbReference type="ChEBI" id="CHEBI:29103"/>
    </ligand>
</feature>
<feature type="binding site" evidence="1">
    <location>
        <position position="67"/>
    </location>
    <ligand>
        <name>K(+)</name>
        <dbReference type="ChEBI" id="CHEBI:29103"/>
    </ligand>
</feature>
<feature type="binding site" evidence="1">
    <location>
        <position position="68"/>
    </location>
    <ligand>
        <name>K(+)</name>
        <dbReference type="ChEBI" id="CHEBI:29103"/>
    </ligand>
</feature>
<feature type="binding site" evidence="2">
    <location>
        <position position="74"/>
    </location>
    <ligand>
        <name>ATP</name>
        <dbReference type="ChEBI" id="CHEBI:30616"/>
    </ligand>
</feature>
<feature type="binding site" evidence="2">
    <location>
        <position position="155"/>
    </location>
    <ligand>
        <name>ATP</name>
        <dbReference type="ChEBI" id="CHEBI:30616"/>
    </ligand>
</feature>
<feature type="binding site" evidence="1">
    <location>
        <position position="221"/>
    </location>
    <ligand>
        <name>Mg(2+)</name>
        <dbReference type="ChEBI" id="CHEBI:18420"/>
    </ligand>
</feature>
<feature type="binding site" evidence="1">
    <location>
        <position position="244"/>
    </location>
    <ligand>
        <name>substrate</name>
    </ligand>
</feature>
<feature type="binding site" evidence="1">
    <location>
        <position position="245"/>
    </location>
    <ligand>
        <name>Mg(2+)</name>
        <dbReference type="ChEBI" id="CHEBI:18420"/>
    </ligand>
</feature>
<feature type="binding site" evidence="1">
    <location>
        <position position="245"/>
    </location>
    <ligand>
        <name>substrate</name>
    </ligand>
</feature>
<feature type="binding site" evidence="1">
    <location>
        <position position="277"/>
    </location>
    <ligand>
        <name>substrate</name>
    </ligand>
</feature>
<feature type="site" description="Transition state stabilizer" evidence="1">
    <location>
        <position position="219"/>
    </location>
</feature>
<proteinExistence type="inferred from homology"/>
<gene>
    <name type="primary">pyk</name>
    <name type="ordered locus">TC_0609</name>
</gene>
<name>KPYK_CHLMU</name>
<evidence type="ECO:0000250" key="1"/>
<evidence type="ECO:0000250" key="2">
    <source>
        <dbReference type="UniProtKB" id="P14618"/>
    </source>
</evidence>
<evidence type="ECO:0000305" key="3"/>
<keyword id="KW-0067">ATP-binding</keyword>
<keyword id="KW-0324">Glycolysis</keyword>
<keyword id="KW-0418">Kinase</keyword>
<keyword id="KW-0460">Magnesium</keyword>
<keyword id="KW-0479">Metal-binding</keyword>
<keyword id="KW-0547">Nucleotide-binding</keyword>
<keyword id="KW-0630">Potassium</keyword>
<keyword id="KW-0670">Pyruvate</keyword>
<keyword id="KW-0808">Transferase</keyword>
<sequence length="481" mass="53175">MIARTKIICTIGPATNTPEMLEKLLDAGMNVARLNFSHGTHESHGRTIAILKELREKRQVPLAIMLDTKGPEIRLGQVESPIKVKPGDRLTLTSKEILGSKEAGVTLYPSCVFPFVRERAPVLIDDGYIQAVVVNAQEHLIEIEFQNSGEIKSNKSLSIKDIDVALPFMTEKDITDLKFGVEQELDLIAASFVRCNEDIDSMRKVLENFGRPNMPIIAKIENHLGVQNFQEIAKASDGIMIARGDLGIELSIVEVPALQKFMARVSRETGRFCITATQMLESMIRNPLPTRAEVSDVANAIHDGTSAVMLSGETASGTYPIEAVKTMRSIIQETEKSFDYQAFFQLNDKNSALKVSPYLEAIGASGIQIAEKASAKAIIVYTQTGGSPMFLSKYRPYLPIIAVTPNRNVYYRLAVEWGVYPMLTSESNRTVWRHQACVYGVEKGILSNYDKILVFSRGAGMQDTNNLTLTTVNDVLSPSLE</sequence>
<protein>
    <recommendedName>
        <fullName>Pyruvate kinase</fullName>
        <shortName>PK</shortName>
        <ecNumber>2.7.1.40</ecNumber>
    </recommendedName>
</protein>
<organism>
    <name type="scientific">Chlamydia muridarum (strain MoPn / Nigg)</name>
    <dbReference type="NCBI Taxonomy" id="243161"/>
    <lineage>
        <taxon>Bacteria</taxon>
        <taxon>Pseudomonadati</taxon>
        <taxon>Chlamydiota</taxon>
        <taxon>Chlamydiia</taxon>
        <taxon>Chlamydiales</taxon>
        <taxon>Chlamydiaceae</taxon>
        <taxon>Chlamydia/Chlamydophila group</taxon>
        <taxon>Chlamydia</taxon>
    </lineage>
</organism>
<comment type="catalytic activity">
    <reaction>
        <text>pyruvate + ATP = phosphoenolpyruvate + ADP + H(+)</text>
        <dbReference type="Rhea" id="RHEA:18157"/>
        <dbReference type="ChEBI" id="CHEBI:15361"/>
        <dbReference type="ChEBI" id="CHEBI:15378"/>
        <dbReference type="ChEBI" id="CHEBI:30616"/>
        <dbReference type="ChEBI" id="CHEBI:58702"/>
        <dbReference type="ChEBI" id="CHEBI:456216"/>
        <dbReference type="EC" id="2.7.1.40"/>
    </reaction>
</comment>
<comment type="cofactor">
    <cofactor>
        <name>Mg(2+)</name>
        <dbReference type="ChEBI" id="CHEBI:18420"/>
    </cofactor>
</comment>
<comment type="cofactor">
    <cofactor>
        <name>K(+)</name>
        <dbReference type="ChEBI" id="CHEBI:29103"/>
    </cofactor>
</comment>
<comment type="pathway">
    <text>Carbohydrate degradation; glycolysis; pyruvate from D-glyceraldehyde 3-phosphate: step 5/5.</text>
</comment>
<comment type="subunit">
    <text evidence="1">Homotetramer.</text>
</comment>
<comment type="similarity">
    <text evidence="3">Belongs to the pyruvate kinase family.</text>
</comment>
<reference key="1">
    <citation type="journal article" date="2000" name="Nucleic Acids Res.">
        <title>Genome sequences of Chlamydia trachomatis MoPn and Chlamydia pneumoniae AR39.</title>
        <authorList>
            <person name="Read T.D."/>
            <person name="Brunham R.C."/>
            <person name="Shen C."/>
            <person name="Gill S.R."/>
            <person name="Heidelberg J.F."/>
            <person name="White O."/>
            <person name="Hickey E.K."/>
            <person name="Peterson J.D."/>
            <person name="Utterback T.R."/>
            <person name="Berry K.J."/>
            <person name="Bass S."/>
            <person name="Linher K.D."/>
            <person name="Weidman J.F."/>
            <person name="Khouri H.M."/>
            <person name="Craven B."/>
            <person name="Bowman C."/>
            <person name="Dodson R.J."/>
            <person name="Gwinn M.L."/>
            <person name="Nelson W.C."/>
            <person name="DeBoy R.T."/>
            <person name="Kolonay J.F."/>
            <person name="McClarty G."/>
            <person name="Salzberg S.L."/>
            <person name="Eisen J.A."/>
            <person name="Fraser C.M."/>
        </authorList>
    </citation>
    <scope>NUCLEOTIDE SEQUENCE [LARGE SCALE GENOMIC DNA]</scope>
    <source>
        <strain>MoPn / Nigg</strain>
    </source>
</reference>